<organism>
    <name type="scientific">Conus magus</name>
    <name type="common">Magical cone</name>
    <dbReference type="NCBI Taxonomy" id="6492"/>
    <lineage>
        <taxon>Eukaryota</taxon>
        <taxon>Metazoa</taxon>
        <taxon>Spiralia</taxon>
        <taxon>Lophotrochozoa</taxon>
        <taxon>Mollusca</taxon>
        <taxon>Gastropoda</taxon>
        <taxon>Caenogastropoda</taxon>
        <taxon>Neogastropoda</taxon>
        <taxon>Conoidea</taxon>
        <taxon>Conidae</taxon>
        <taxon>Conus</taxon>
        <taxon>Pionoconus</taxon>
    </lineage>
</organism>
<evidence type="ECO:0000250" key="1"/>
<evidence type="ECO:0000250" key="2">
    <source>
        <dbReference type="UniProtKB" id="P01519"/>
    </source>
</evidence>
<evidence type="ECO:0000269" key="3">
    <source>
    </source>
</evidence>
<evidence type="ECO:0000305" key="4"/>
<reference key="1">
    <citation type="journal article" date="2002" name="J. Biol. Chem.">
        <title>Alpha-conotoxin GIC from Conus geographus, a novel peptide antagonist of nicotinic acetylcholine receptors.</title>
        <authorList>
            <person name="McIntosh J.M."/>
            <person name="Dowell C."/>
            <person name="Watkins M."/>
            <person name="Garrett J.E."/>
            <person name="Yoshikami D."/>
            <person name="Olivera B.M."/>
        </authorList>
    </citation>
    <scope>REVIEW</scope>
    <scope>AMIDATION AT CYS-15</scope>
</reference>
<keyword id="KW-0008">Acetylcholine receptor inhibiting toxin</keyword>
<keyword id="KW-0027">Amidation</keyword>
<keyword id="KW-1015">Disulfide bond</keyword>
<keyword id="KW-0872">Ion channel impairing toxin</keyword>
<keyword id="KW-0528">Neurotoxin</keyword>
<keyword id="KW-0629">Postsynaptic neurotoxin</keyword>
<keyword id="KW-0964">Secreted</keyword>
<keyword id="KW-0800">Toxin</keyword>
<comment type="function">
    <text evidence="1">Alpha-conotoxins act on postsynaptic membranes, they bind to the nicotinic acetylcholine receptors (nAChR) and thus inhibit them.</text>
</comment>
<comment type="subcellular location">
    <subcellularLocation>
        <location>Secreted</location>
    </subcellularLocation>
</comment>
<comment type="tissue specificity">
    <text>Expressed by the venom duct.</text>
</comment>
<comment type="domain">
    <text>The cysteine framework is I (CC-C-C). Alpha3/5 pattern.</text>
</comment>
<comment type="similarity">
    <text evidence="4">Belongs to the conotoxin A superfamily.</text>
</comment>
<accession>P0C1W1</accession>
<feature type="peptide" id="PRO_0000249788" description="Alpha-conotoxin-like MIA">
    <location>
        <begin position="1"/>
        <end position="15"/>
    </location>
</feature>
<feature type="modified residue" description="Cysteine amide" evidence="3">
    <location>
        <position position="15"/>
    </location>
</feature>
<feature type="disulfide bond" evidence="2">
    <location>
        <begin position="4"/>
        <end position="9"/>
    </location>
</feature>
<feature type="disulfide bond" evidence="2">
    <location>
        <begin position="5"/>
        <end position="15"/>
    </location>
</feature>
<name>CA1A_CONMA</name>
<dbReference type="ConoServer" id="14">
    <property type="toxin name" value="M1A"/>
</dbReference>
<dbReference type="GO" id="GO:0005576">
    <property type="term" value="C:extracellular region"/>
    <property type="evidence" value="ECO:0007669"/>
    <property type="project" value="UniProtKB-SubCell"/>
</dbReference>
<dbReference type="GO" id="GO:0035792">
    <property type="term" value="C:host cell postsynaptic membrane"/>
    <property type="evidence" value="ECO:0007669"/>
    <property type="project" value="UniProtKB-KW"/>
</dbReference>
<dbReference type="GO" id="GO:0030550">
    <property type="term" value="F:acetylcholine receptor inhibitor activity"/>
    <property type="evidence" value="ECO:0007669"/>
    <property type="project" value="UniProtKB-KW"/>
</dbReference>
<dbReference type="GO" id="GO:0099106">
    <property type="term" value="F:ion channel regulator activity"/>
    <property type="evidence" value="ECO:0007669"/>
    <property type="project" value="UniProtKB-KW"/>
</dbReference>
<dbReference type="GO" id="GO:0090729">
    <property type="term" value="F:toxin activity"/>
    <property type="evidence" value="ECO:0007669"/>
    <property type="project" value="UniProtKB-KW"/>
</dbReference>
<proteinExistence type="evidence at protein level"/>
<protein>
    <recommendedName>
        <fullName>Alpha-conotoxin-like MIA</fullName>
    </recommendedName>
</protein>
<sequence>DGRCCHPACAKHFNC</sequence>